<comment type="function">
    <text evidence="1">One of the primary rRNA binding proteins, it binds directly to 16S rRNA central domain where it helps coordinate assembly of the platform of the 30S subunit.</text>
</comment>
<comment type="subunit">
    <text evidence="1">Part of the 30S ribosomal subunit. Contacts proteins S5 and S12.</text>
</comment>
<comment type="similarity">
    <text evidence="1">Belongs to the universal ribosomal protein uS8 family.</text>
</comment>
<sequence length="131" mass="14733">MINDIISDSLTRIRNAGMRKLETTKLLHSKVVEALVGIFQAKGYIESFNVIEEDKKKFINVVLKYDEKGKSVINELKRISKPGRRVYKGKDEIKRFKNGYGTIVVSTSHGVLANDEAYKAGVGGEILCTIW</sequence>
<protein>
    <recommendedName>
        <fullName evidence="1">Small ribosomal subunit protein uS8</fullName>
    </recommendedName>
    <alternativeName>
        <fullName evidence="2">30S ribosomal protein S8</fullName>
    </alternativeName>
</protein>
<keyword id="KW-0687">Ribonucleoprotein</keyword>
<keyword id="KW-0689">Ribosomal protein</keyword>
<keyword id="KW-0694">RNA-binding</keyword>
<keyword id="KW-0699">rRNA-binding</keyword>
<evidence type="ECO:0000255" key="1">
    <source>
        <dbReference type="HAMAP-Rule" id="MF_01302"/>
    </source>
</evidence>
<evidence type="ECO:0000305" key="2"/>
<organism>
    <name type="scientific">Campylobacter jejuni subsp. jejuni serotype O:6 (strain 81116 / NCTC 11828)</name>
    <dbReference type="NCBI Taxonomy" id="407148"/>
    <lineage>
        <taxon>Bacteria</taxon>
        <taxon>Pseudomonadati</taxon>
        <taxon>Campylobacterota</taxon>
        <taxon>Epsilonproteobacteria</taxon>
        <taxon>Campylobacterales</taxon>
        <taxon>Campylobacteraceae</taxon>
        <taxon>Campylobacter</taxon>
    </lineage>
</organism>
<proteinExistence type="inferred from homology"/>
<name>RS8_CAMJ8</name>
<accession>A8FP07</accession>
<gene>
    <name evidence="1" type="primary">rpsH</name>
    <name type="ordered locus">C8J_1597</name>
</gene>
<feature type="chain" id="PRO_1000073190" description="Small ribosomal subunit protein uS8">
    <location>
        <begin position="1"/>
        <end position="131"/>
    </location>
</feature>
<reference key="1">
    <citation type="journal article" date="2007" name="J. Bacteriol.">
        <title>The complete genome sequence of Campylobacter jejuni strain 81116 (NCTC11828).</title>
        <authorList>
            <person name="Pearson B.M."/>
            <person name="Gaskin D.J.H."/>
            <person name="Segers R.P.A.M."/>
            <person name="Wells J.M."/>
            <person name="Nuijten P.J.M."/>
            <person name="van Vliet A.H.M."/>
        </authorList>
    </citation>
    <scope>NUCLEOTIDE SEQUENCE [LARGE SCALE GENOMIC DNA]</scope>
    <source>
        <strain>81116 / NCTC 11828</strain>
    </source>
</reference>
<dbReference type="EMBL" id="CP000814">
    <property type="protein sequence ID" value="ABV53194.1"/>
    <property type="molecule type" value="Genomic_DNA"/>
</dbReference>
<dbReference type="RefSeq" id="WP_002851353.1">
    <property type="nucleotide sequence ID" value="NC_009839.1"/>
</dbReference>
<dbReference type="SMR" id="A8FP07"/>
<dbReference type="KEGG" id="cju:C8J_1597"/>
<dbReference type="HOGENOM" id="CLU_098428_0_2_7"/>
<dbReference type="GO" id="GO:1990904">
    <property type="term" value="C:ribonucleoprotein complex"/>
    <property type="evidence" value="ECO:0007669"/>
    <property type="project" value="UniProtKB-KW"/>
</dbReference>
<dbReference type="GO" id="GO:0005840">
    <property type="term" value="C:ribosome"/>
    <property type="evidence" value="ECO:0007669"/>
    <property type="project" value="UniProtKB-KW"/>
</dbReference>
<dbReference type="GO" id="GO:0019843">
    <property type="term" value="F:rRNA binding"/>
    <property type="evidence" value="ECO:0007669"/>
    <property type="project" value="UniProtKB-UniRule"/>
</dbReference>
<dbReference type="GO" id="GO:0003735">
    <property type="term" value="F:structural constituent of ribosome"/>
    <property type="evidence" value="ECO:0007669"/>
    <property type="project" value="InterPro"/>
</dbReference>
<dbReference type="GO" id="GO:0006412">
    <property type="term" value="P:translation"/>
    <property type="evidence" value="ECO:0007669"/>
    <property type="project" value="UniProtKB-UniRule"/>
</dbReference>
<dbReference type="FunFam" id="3.30.1370.30:FF:000002">
    <property type="entry name" value="30S ribosomal protein S8"/>
    <property type="match status" value="1"/>
</dbReference>
<dbReference type="FunFam" id="3.30.1490.10:FF:000001">
    <property type="entry name" value="30S ribosomal protein S8"/>
    <property type="match status" value="1"/>
</dbReference>
<dbReference type="Gene3D" id="3.30.1370.30">
    <property type="match status" value="1"/>
</dbReference>
<dbReference type="Gene3D" id="3.30.1490.10">
    <property type="match status" value="1"/>
</dbReference>
<dbReference type="HAMAP" id="MF_01302_B">
    <property type="entry name" value="Ribosomal_uS8_B"/>
    <property type="match status" value="1"/>
</dbReference>
<dbReference type="InterPro" id="IPR000630">
    <property type="entry name" value="Ribosomal_uS8"/>
</dbReference>
<dbReference type="InterPro" id="IPR047863">
    <property type="entry name" value="Ribosomal_uS8_CS"/>
</dbReference>
<dbReference type="InterPro" id="IPR035987">
    <property type="entry name" value="Ribosomal_uS8_sf"/>
</dbReference>
<dbReference type="NCBIfam" id="NF001109">
    <property type="entry name" value="PRK00136.1"/>
    <property type="match status" value="1"/>
</dbReference>
<dbReference type="PANTHER" id="PTHR11758">
    <property type="entry name" value="40S RIBOSOMAL PROTEIN S15A"/>
    <property type="match status" value="1"/>
</dbReference>
<dbReference type="Pfam" id="PF00410">
    <property type="entry name" value="Ribosomal_S8"/>
    <property type="match status" value="1"/>
</dbReference>
<dbReference type="SUPFAM" id="SSF56047">
    <property type="entry name" value="Ribosomal protein S8"/>
    <property type="match status" value="1"/>
</dbReference>
<dbReference type="PROSITE" id="PS00053">
    <property type="entry name" value="RIBOSOMAL_S8"/>
    <property type="match status" value="1"/>
</dbReference>